<gene>
    <name type="ORF">ORF VII</name>
</gene>
<reference key="1">
    <citation type="journal article" date="1989" name="Nucleic Acids Res.">
        <title>The complete sequence of soybean chlorotic mottle virus DNA and the identification of a novel promoter.</title>
        <authorList>
            <person name="Hasegawa A."/>
            <person name="Verver J."/>
            <person name="Shimada A."/>
            <person name="Saito M."/>
            <person name="Goldbach R."/>
            <person name="van Kammen A."/>
            <person name="Miki K."/>
            <person name="Kameya-Iwaki M."/>
            <person name="Hibi T."/>
        </authorList>
    </citation>
    <scope>NUCLEOTIDE SEQUENCE [GENOMIC DNA]</scope>
</reference>
<reference key="2">
    <citation type="submission" date="2000-11" db="EMBL/GenBank/DDBJ databases">
        <authorList>
            <person name="Hibi T."/>
        </authorList>
    </citation>
    <scope>SEQUENCE REVISION TO 140</scope>
</reference>
<name>Y7_SOCMV</name>
<organismHost>
    <name type="scientific">Glycine max</name>
    <name type="common">Soybean</name>
    <name type="synonym">Glycine hispida</name>
    <dbReference type="NCBI Taxonomy" id="3847"/>
</organismHost>
<organismHost>
    <name type="scientific">Lablab purpureus</name>
    <name type="common">Hyacinth bean</name>
    <name type="synonym">Dolichos lablab</name>
    <dbReference type="NCBI Taxonomy" id="35936"/>
</organismHost>
<organismHost>
    <name type="scientific">Phaseolus vulgaris</name>
    <name type="common">Kidney bean</name>
    <name type="synonym">French bean</name>
    <dbReference type="NCBI Taxonomy" id="3885"/>
</organismHost>
<organismHost>
    <name type="scientific">Vigna unguiculata</name>
    <name type="common">Cowpea</name>
    <dbReference type="NCBI Taxonomy" id="3917"/>
</organismHost>
<protein>
    <recommendedName>
        <fullName>Uncharacterized protein 7</fullName>
    </recommendedName>
</protein>
<keyword id="KW-1185">Reference proteome</keyword>
<sequence length="148" mass="17071">MNSDSVICLASLSNYCQYHILGIINNRIVPILIDTGASWSHISASFLKTHQIKNCEEKSVRRFDGTTKKLNKKTLIEIDLSGIQNVKLELYVDEEPNKILLGTDFLENFYFKIESDCLFLNQNQHPRFKLHEDKIFEIIQDLTIPNGI</sequence>
<accession>P15634</accession>
<organism>
    <name type="scientific">Soybean chlorotic mottle virus</name>
    <dbReference type="NCBI Taxonomy" id="10651"/>
    <lineage>
        <taxon>Viruses</taxon>
        <taxon>Riboviria</taxon>
        <taxon>Pararnavirae</taxon>
        <taxon>Artverviricota</taxon>
        <taxon>Revtraviricetes</taxon>
        <taxon>Ortervirales</taxon>
        <taxon>Caulimoviridae</taxon>
        <taxon>Soymovirus</taxon>
        <taxon>Soymovirus maculaglycinis</taxon>
    </lineage>
</organism>
<dbReference type="EMBL" id="X15828">
    <property type="protein sequence ID" value="CAC16947.1"/>
    <property type="molecule type" value="Genomic_DNA"/>
</dbReference>
<dbReference type="PIR" id="JS0377">
    <property type="entry name" value="JS0377"/>
</dbReference>
<dbReference type="SMR" id="P15634"/>
<dbReference type="KEGG" id="vg:912258"/>
<dbReference type="OrthoDB" id="40750at10239"/>
<dbReference type="Proteomes" id="UP000001065">
    <property type="component" value="Genome"/>
</dbReference>
<dbReference type="GO" id="GO:0004190">
    <property type="term" value="F:aspartic-type endopeptidase activity"/>
    <property type="evidence" value="ECO:0007669"/>
    <property type="project" value="InterPro"/>
</dbReference>
<dbReference type="GO" id="GO:0006508">
    <property type="term" value="P:proteolysis"/>
    <property type="evidence" value="ECO:0007669"/>
    <property type="project" value="InterPro"/>
</dbReference>
<dbReference type="CDD" id="cd00303">
    <property type="entry name" value="retropepsin_like"/>
    <property type="match status" value="1"/>
</dbReference>
<dbReference type="Gene3D" id="2.40.70.10">
    <property type="entry name" value="Acid Proteases"/>
    <property type="match status" value="1"/>
</dbReference>
<dbReference type="InterPro" id="IPR001969">
    <property type="entry name" value="Aspartic_peptidase_AS"/>
</dbReference>
<dbReference type="InterPro" id="IPR021109">
    <property type="entry name" value="Peptidase_aspartic_dom_sf"/>
</dbReference>
<dbReference type="Pfam" id="PF13975">
    <property type="entry name" value="gag-asp_proteas"/>
    <property type="match status" value="1"/>
</dbReference>
<dbReference type="SUPFAM" id="SSF50630">
    <property type="entry name" value="Acid proteases"/>
    <property type="match status" value="1"/>
</dbReference>
<feature type="chain" id="PRO_0000222086" description="Uncharacterized protein 7">
    <location>
        <begin position="1"/>
        <end position="148"/>
    </location>
</feature>
<proteinExistence type="predicted"/>